<gene>
    <name evidence="1" type="primary">carB</name>
    <name type="ordered locus">Mlab_0283</name>
</gene>
<comment type="function">
    <text evidence="1">Large subunit of the glutamine-dependent carbamoyl phosphate synthetase (CPSase). CPSase catalyzes the formation of carbamoyl phosphate from the ammonia moiety of glutamine, carbonate, and phosphate donated by ATP, constituting the first step of 2 biosynthetic pathways, one leading to arginine and/or urea and the other to pyrimidine nucleotides. The large subunit (synthetase) binds the substrates ammonia (free or transferred from glutamine from the small subunit), hydrogencarbonate and ATP and carries out an ATP-coupled ligase reaction, activating hydrogencarbonate by forming carboxy phosphate which reacts with ammonia to form carbamoyl phosphate.</text>
</comment>
<comment type="catalytic activity">
    <reaction evidence="1">
        <text>hydrogencarbonate + L-glutamine + 2 ATP + H2O = carbamoyl phosphate + L-glutamate + 2 ADP + phosphate + 2 H(+)</text>
        <dbReference type="Rhea" id="RHEA:18633"/>
        <dbReference type="ChEBI" id="CHEBI:15377"/>
        <dbReference type="ChEBI" id="CHEBI:15378"/>
        <dbReference type="ChEBI" id="CHEBI:17544"/>
        <dbReference type="ChEBI" id="CHEBI:29985"/>
        <dbReference type="ChEBI" id="CHEBI:30616"/>
        <dbReference type="ChEBI" id="CHEBI:43474"/>
        <dbReference type="ChEBI" id="CHEBI:58228"/>
        <dbReference type="ChEBI" id="CHEBI:58359"/>
        <dbReference type="ChEBI" id="CHEBI:456216"/>
        <dbReference type="EC" id="6.3.5.5"/>
    </reaction>
</comment>
<comment type="catalytic activity">
    <molecule>Carbamoyl phosphate synthase large chain</molecule>
    <reaction evidence="1">
        <text>hydrogencarbonate + NH4(+) + 2 ATP = carbamoyl phosphate + 2 ADP + phosphate + 2 H(+)</text>
        <dbReference type="Rhea" id="RHEA:18029"/>
        <dbReference type="ChEBI" id="CHEBI:15378"/>
        <dbReference type="ChEBI" id="CHEBI:17544"/>
        <dbReference type="ChEBI" id="CHEBI:28938"/>
        <dbReference type="ChEBI" id="CHEBI:30616"/>
        <dbReference type="ChEBI" id="CHEBI:43474"/>
        <dbReference type="ChEBI" id="CHEBI:58228"/>
        <dbReference type="ChEBI" id="CHEBI:456216"/>
        <dbReference type="EC" id="6.3.4.16"/>
    </reaction>
</comment>
<comment type="cofactor">
    <cofactor evidence="1">
        <name>Mg(2+)</name>
        <dbReference type="ChEBI" id="CHEBI:18420"/>
    </cofactor>
    <cofactor evidence="1">
        <name>Mn(2+)</name>
        <dbReference type="ChEBI" id="CHEBI:29035"/>
    </cofactor>
    <text evidence="1">Binds 4 Mg(2+) or Mn(2+) ions per subunit.</text>
</comment>
<comment type="pathway">
    <text evidence="1">Amino-acid biosynthesis; L-arginine biosynthesis; carbamoyl phosphate from bicarbonate: step 1/1.</text>
</comment>
<comment type="pathway">
    <text evidence="1">Pyrimidine metabolism; UMP biosynthesis via de novo pathway; (S)-dihydroorotate from bicarbonate: step 1/3.</text>
</comment>
<comment type="subunit">
    <text evidence="1">Composed of two chains; the small (or glutamine) chain promotes the hydrolysis of glutamine to ammonia, which is used by the large (or ammonia) chain to synthesize carbamoyl phosphate. Tetramer of heterodimers (alpha,beta)4.</text>
</comment>
<comment type="domain">
    <text evidence="1">The large subunit is composed of 2 ATP-grasp domains that are involved in binding the 2 ATP molecules needed for carbamoyl phosphate synthesis. The N-terminal ATP-grasp domain (referred to as the carboxyphosphate synthetic component) catalyzes the ATP-dependent phosphorylation of hydrogencarbonate to carboxyphosphate and the subsequent nucleophilic attack by ammonia to form a carbamate intermediate. The C-terminal ATP-grasp domain (referred to as the carbamoyl phosphate synthetic component) then catalyzes the phosphorylation of carbamate with the second ATP to form the end product carbamoyl phosphate. The reactive and unstable enzyme intermediates are sequentially channeled from one active site to the next through the interior of the protein over a distance of at least 96 A.</text>
</comment>
<comment type="similarity">
    <text evidence="1">Belongs to the CarB family.</text>
</comment>
<evidence type="ECO:0000255" key="1">
    <source>
        <dbReference type="HAMAP-Rule" id="MF_01210"/>
    </source>
</evidence>
<name>CARB_METLZ</name>
<sequence length="1053" mass="115992">MPKNTSLKKVLLIGSGPIQIGQAAEFDYAGSQACKAVREEGIEVVLVNSNPATIQTDPETADKVYVEPLKADIIAEIIKKEKPDGILSGMGGQTGLNLTAELYELGALEGVQILGTPLEAIYHGEDRDLFKKLMLEIGEPIPKSFILTKIEQLDEAYEEVGLPAIIRPAYTLGGAGGGVANTKEELRTIVEHGLTKSRVHQVLIEESVKGWNEIEFEVMRDAADTCIIICGMENVDPMGVHTGESVVVAPILSLTSDEFGIMRRAAIKIIRALNVQGGCNIQFAFNNGDYRVIEVNPRVSRSSALASKATGYPIARVAAKVAIGLHLDEIMNTVTGCTPACFEPAVDYVVVKVSRWPFDKFKTADRTLTTSMKSTGEVMAIGRTVEEGFKKALRSLDTDIYRHTDLNEIRMILSRPTDERFPTLFDAFRLGMTVKEVYDLTQIEPFFLEKIQNVVDIELELRDHPTEELVKTSKKFGFSNAEIRELTGWNIYKIESLVGLPTYKMVDTCSAEFPAKTPYYYSTWEQECELTQSDRKKILILGSGAIRIGQGIEFDYCTVHAVKSLREEGIEVHILNNNPETVSTDFDTSDRLYFEPMQLEDVVNILRKGDYDGVMVQFGGQNSVNLAIPIQEEIKLFGLKTKVLGTSPDNMDVAEDRNRFSVLLDQNNIPSPANGSAYSEKEAYAIANKIGYPVLVRPSYVLGGRAMELVHDELELQTYIKEAVRVSNTHPVLIDRYLDNATELDVDAVSDGETVLIGGVMEHIEEAGVHSGDSACVIPTQTLTPEQIATVKDYTRKIALSLGVVGLINIQYAIHKGTVYVLEANPRASRTVPFVSKATGLPLAKIAAKLMLGKKLADLGYQEKEISHVAVKEVLLPFSRLPGVDPILGPEMKSTGEVIGIDYDFGRAFYKASQAADNTIPLKGNVFISVTNDQKTEILPIARKLYDLGFSLYGTEGTVKFLAQNDIPMNLVRKVQEGSPNILDMIRALDVHLLINTPGDKNARADHLQIMRASIDYSIPYITTIFGAEAAVQAIESMKTNTITVEPLSHYHS</sequence>
<accession>A2SQ53</accession>
<dbReference type="EC" id="6.3.4.16" evidence="1"/>
<dbReference type="EC" id="6.3.5.5" evidence="1"/>
<dbReference type="EMBL" id="CP000559">
    <property type="protein sequence ID" value="ABN06459.1"/>
    <property type="molecule type" value="Genomic_DNA"/>
</dbReference>
<dbReference type="RefSeq" id="WP_011832660.1">
    <property type="nucleotide sequence ID" value="NC_008942.1"/>
</dbReference>
<dbReference type="SMR" id="A2SQ53"/>
<dbReference type="STRING" id="410358.Mlab_0283"/>
<dbReference type="GeneID" id="4795384"/>
<dbReference type="KEGG" id="mla:Mlab_0283"/>
<dbReference type="eggNOG" id="arCOG01594">
    <property type="taxonomic scope" value="Archaea"/>
</dbReference>
<dbReference type="HOGENOM" id="CLU_000513_1_2_2"/>
<dbReference type="OrthoDB" id="85487at2157"/>
<dbReference type="UniPathway" id="UPA00068">
    <property type="reaction ID" value="UER00171"/>
</dbReference>
<dbReference type="UniPathway" id="UPA00070">
    <property type="reaction ID" value="UER00115"/>
</dbReference>
<dbReference type="Proteomes" id="UP000000365">
    <property type="component" value="Chromosome"/>
</dbReference>
<dbReference type="GO" id="GO:0005737">
    <property type="term" value="C:cytoplasm"/>
    <property type="evidence" value="ECO:0007669"/>
    <property type="project" value="TreeGrafter"/>
</dbReference>
<dbReference type="GO" id="GO:0005524">
    <property type="term" value="F:ATP binding"/>
    <property type="evidence" value="ECO:0007669"/>
    <property type="project" value="UniProtKB-UniRule"/>
</dbReference>
<dbReference type="GO" id="GO:0004087">
    <property type="term" value="F:carbamoyl-phosphate synthase (ammonia) activity"/>
    <property type="evidence" value="ECO:0007669"/>
    <property type="project" value="RHEA"/>
</dbReference>
<dbReference type="GO" id="GO:0004088">
    <property type="term" value="F:carbamoyl-phosphate synthase (glutamine-hydrolyzing) activity"/>
    <property type="evidence" value="ECO:0007669"/>
    <property type="project" value="UniProtKB-UniRule"/>
</dbReference>
<dbReference type="GO" id="GO:0046872">
    <property type="term" value="F:metal ion binding"/>
    <property type="evidence" value="ECO:0007669"/>
    <property type="project" value="UniProtKB-KW"/>
</dbReference>
<dbReference type="GO" id="GO:0044205">
    <property type="term" value="P:'de novo' UMP biosynthetic process"/>
    <property type="evidence" value="ECO:0007669"/>
    <property type="project" value="UniProtKB-UniRule"/>
</dbReference>
<dbReference type="GO" id="GO:0006541">
    <property type="term" value="P:glutamine metabolic process"/>
    <property type="evidence" value="ECO:0007669"/>
    <property type="project" value="TreeGrafter"/>
</dbReference>
<dbReference type="GO" id="GO:0006526">
    <property type="term" value="P:L-arginine biosynthetic process"/>
    <property type="evidence" value="ECO:0007669"/>
    <property type="project" value="UniProtKB-UniRule"/>
</dbReference>
<dbReference type="CDD" id="cd01424">
    <property type="entry name" value="MGS_CPS_II"/>
    <property type="match status" value="1"/>
</dbReference>
<dbReference type="FunFam" id="1.10.1030.10:FF:000002">
    <property type="entry name" value="Carbamoyl-phosphate synthase large chain"/>
    <property type="match status" value="1"/>
</dbReference>
<dbReference type="FunFam" id="3.30.1490.20:FF:000001">
    <property type="entry name" value="Carbamoyl-phosphate synthase large chain"/>
    <property type="match status" value="1"/>
</dbReference>
<dbReference type="FunFam" id="3.30.470.20:FF:000001">
    <property type="entry name" value="Carbamoyl-phosphate synthase large chain"/>
    <property type="match status" value="1"/>
</dbReference>
<dbReference type="FunFam" id="3.30.470.20:FF:000013">
    <property type="entry name" value="Carbamoyl-phosphate synthase large chain"/>
    <property type="match status" value="1"/>
</dbReference>
<dbReference type="FunFam" id="3.40.50.20:FF:000001">
    <property type="entry name" value="Carbamoyl-phosphate synthase large chain"/>
    <property type="match status" value="2"/>
</dbReference>
<dbReference type="Gene3D" id="3.40.50.20">
    <property type="match status" value="2"/>
</dbReference>
<dbReference type="Gene3D" id="3.30.1490.20">
    <property type="entry name" value="ATP-grasp fold, A domain"/>
    <property type="match status" value="2"/>
</dbReference>
<dbReference type="Gene3D" id="3.30.470.20">
    <property type="entry name" value="ATP-grasp fold, B domain"/>
    <property type="match status" value="2"/>
</dbReference>
<dbReference type="Gene3D" id="1.10.1030.10">
    <property type="entry name" value="Carbamoyl-phosphate synthetase, large subunit oligomerisation domain"/>
    <property type="match status" value="1"/>
</dbReference>
<dbReference type="Gene3D" id="3.40.50.1380">
    <property type="entry name" value="Methylglyoxal synthase-like domain"/>
    <property type="match status" value="1"/>
</dbReference>
<dbReference type="HAMAP" id="MF_01210_A">
    <property type="entry name" value="CPSase_L_chain_A"/>
    <property type="match status" value="1"/>
</dbReference>
<dbReference type="HAMAP" id="MF_01210_B">
    <property type="entry name" value="CPSase_L_chain_B"/>
    <property type="match status" value="1"/>
</dbReference>
<dbReference type="InterPro" id="IPR011761">
    <property type="entry name" value="ATP-grasp"/>
</dbReference>
<dbReference type="InterPro" id="IPR013815">
    <property type="entry name" value="ATP_grasp_subdomain_1"/>
</dbReference>
<dbReference type="InterPro" id="IPR006275">
    <property type="entry name" value="CarbamoylP_synth_lsu"/>
</dbReference>
<dbReference type="InterPro" id="IPR005480">
    <property type="entry name" value="CarbamoylP_synth_lsu_oligo"/>
</dbReference>
<dbReference type="InterPro" id="IPR036897">
    <property type="entry name" value="CarbamoylP_synth_lsu_oligo_sf"/>
</dbReference>
<dbReference type="InterPro" id="IPR005479">
    <property type="entry name" value="CbamoylP_synth_lsu-like_ATP-bd"/>
</dbReference>
<dbReference type="InterPro" id="IPR005483">
    <property type="entry name" value="CbamoylP_synth_lsu_CPSase_dom"/>
</dbReference>
<dbReference type="InterPro" id="IPR011607">
    <property type="entry name" value="MGS-like_dom"/>
</dbReference>
<dbReference type="InterPro" id="IPR036914">
    <property type="entry name" value="MGS-like_dom_sf"/>
</dbReference>
<dbReference type="InterPro" id="IPR033937">
    <property type="entry name" value="MGS_CPS_CarB"/>
</dbReference>
<dbReference type="InterPro" id="IPR016185">
    <property type="entry name" value="PreATP-grasp_dom_sf"/>
</dbReference>
<dbReference type="NCBIfam" id="TIGR01369">
    <property type="entry name" value="CPSaseII_lrg"/>
    <property type="match status" value="1"/>
</dbReference>
<dbReference type="NCBIfam" id="NF003671">
    <property type="entry name" value="PRK05294.1"/>
    <property type="match status" value="1"/>
</dbReference>
<dbReference type="NCBIfam" id="NF009455">
    <property type="entry name" value="PRK12815.1"/>
    <property type="match status" value="1"/>
</dbReference>
<dbReference type="PANTHER" id="PTHR11405:SF53">
    <property type="entry name" value="CARBAMOYL-PHOSPHATE SYNTHASE [AMMONIA], MITOCHONDRIAL"/>
    <property type="match status" value="1"/>
</dbReference>
<dbReference type="PANTHER" id="PTHR11405">
    <property type="entry name" value="CARBAMOYLTRANSFERASE FAMILY MEMBER"/>
    <property type="match status" value="1"/>
</dbReference>
<dbReference type="Pfam" id="PF02786">
    <property type="entry name" value="CPSase_L_D2"/>
    <property type="match status" value="2"/>
</dbReference>
<dbReference type="Pfam" id="PF02787">
    <property type="entry name" value="CPSase_L_D3"/>
    <property type="match status" value="1"/>
</dbReference>
<dbReference type="Pfam" id="PF02142">
    <property type="entry name" value="MGS"/>
    <property type="match status" value="1"/>
</dbReference>
<dbReference type="PRINTS" id="PR00098">
    <property type="entry name" value="CPSASE"/>
</dbReference>
<dbReference type="SMART" id="SM01096">
    <property type="entry name" value="CPSase_L_D3"/>
    <property type="match status" value="1"/>
</dbReference>
<dbReference type="SMART" id="SM00851">
    <property type="entry name" value="MGS"/>
    <property type="match status" value="1"/>
</dbReference>
<dbReference type="SUPFAM" id="SSF48108">
    <property type="entry name" value="Carbamoyl phosphate synthetase, large subunit connection domain"/>
    <property type="match status" value="1"/>
</dbReference>
<dbReference type="SUPFAM" id="SSF56059">
    <property type="entry name" value="Glutathione synthetase ATP-binding domain-like"/>
    <property type="match status" value="2"/>
</dbReference>
<dbReference type="SUPFAM" id="SSF52335">
    <property type="entry name" value="Methylglyoxal synthase-like"/>
    <property type="match status" value="1"/>
</dbReference>
<dbReference type="SUPFAM" id="SSF52440">
    <property type="entry name" value="PreATP-grasp domain"/>
    <property type="match status" value="2"/>
</dbReference>
<dbReference type="PROSITE" id="PS50975">
    <property type="entry name" value="ATP_GRASP"/>
    <property type="match status" value="2"/>
</dbReference>
<dbReference type="PROSITE" id="PS00866">
    <property type="entry name" value="CPSASE_1"/>
    <property type="match status" value="1"/>
</dbReference>
<dbReference type="PROSITE" id="PS00867">
    <property type="entry name" value="CPSASE_2"/>
    <property type="match status" value="2"/>
</dbReference>
<dbReference type="PROSITE" id="PS51855">
    <property type="entry name" value="MGS"/>
    <property type="match status" value="1"/>
</dbReference>
<feature type="chain" id="PRO_1000066365" description="Carbamoyl phosphate synthase large chain">
    <location>
        <begin position="1"/>
        <end position="1053"/>
    </location>
</feature>
<feature type="domain" description="ATP-grasp 1" evidence="1">
    <location>
        <begin position="131"/>
        <end position="323"/>
    </location>
</feature>
<feature type="domain" description="ATP-grasp 2" evidence="1">
    <location>
        <begin position="661"/>
        <end position="852"/>
    </location>
</feature>
<feature type="domain" description="MGS-like" evidence="1">
    <location>
        <begin position="918"/>
        <end position="1053"/>
    </location>
</feature>
<feature type="region of interest" description="Carboxyphosphate synthetic domain" evidence="1">
    <location>
        <begin position="1"/>
        <end position="397"/>
    </location>
</feature>
<feature type="region of interest" description="Oligomerization domain" evidence="1">
    <location>
        <begin position="398"/>
        <end position="530"/>
    </location>
</feature>
<feature type="region of interest" description="Carbamoyl phosphate synthetic domain" evidence="1">
    <location>
        <begin position="531"/>
        <end position="919"/>
    </location>
</feature>
<feature type="region of interest" description="Allosteric domain" evidence="1">
    <location>
        <begin position="920"/>
        <end position="1053"/>
    </location>
</feature>
<feature type="binding site" evidence="1">
    <location>
        <position position="127"/>
    </location>
    <ligand>
        <name>ATP</name>
        <dbReference type="ChEBI" id="CHEBI:30616"/>
        <label>1</label>
    </ligand>
</feature>
<feature type="binding site" evidence="1">
    <location>
        <position position="167"/>
    </location>
    <ligand>
        <name>ATP</name>
        <dbReference type="ChEBI" id="CHEBI:30616"/>
        <label>1</label>
    </ligand>
</feature>
<feature type="binding site" evidence="1">
    <location>
        <position position="173"/>
    </location>
    <ligand>
        <name>ATP</name>
        <dbReference type="ChEBI" id="CHEBI:30616"/>
        <label>1</label>
    </ligand>
</feature>
<feature type="binding site" evidence="1">
    <location>
        <position position="174"/>
    </location>
    <ligand>
        <name>ATP</name>
        <dbReference type="ChEBI" id="CHEBI:30616"/>
        <label>1</label>
    </ligand>
</feature>
<feature type="binding site" evidence="1">
    <location>
        <position position="206"/>
    </location>
    <ligand>
        <name>ATP</name>
        <dbReference type="ChEBI" id="CHEBI:30616"/>
        <label>1</label>
    </ligand>
</feature>
<feature type="binding site" evidence="1">
    <location>
        <position position="208"/>
    </location>
    <ligand>
        <name>ATP</name>
        <dbReference type="ChEBI" id="CHEBI:30616"/>
        <label>1</label>
    </ligand>
</feature>
<feature type="binding site" evidence="1">
    <location>
        <position position="213"/>
    </location>
    <ligand>
        <name>ATP</name>
        <dbReference type="ChEBI" id="CHEBI:30616"/>
        <label>1</label>
    </ligand>
</feature>
<feature type="binding site" evidence="1">
    <location>
        <position position="239"/>
    </location>
    <ligand>
        <name>ATP</name>
        <dbReference type="ChEBI" id="CHEBI:30616"/>
        <label>1</label>
    </ligand>
</feature>
<feature type="binding site" evidence="1">
    <location>
        <position position="240"/>
    </location>
    <ligand>
        <name>ATP</name>
        <dbReference type="ChEBI" id="CHEBI:30616"/>
        <label>1</label>
    </ligand>
</feature>
<feature type="binding site" evidence="1">
    <location>
        <position position="241"/>
    </location>
    <ligand>
        <name>ATP</name>
        <dbReference type="ChEBI" id="CHEBI:30616"/>
        <label>1</label>
    </ligand>
</feature>
<feature type="binding site" evidence="1">
    <location>
        <position position="282"/>
    </location>
    <ligand>
        <name>ATP</name>
        <dbReference type="ChEBI" id="CHEBI:30616"/>
        <label>1</label>
    </ligand>
</feature>
<feature type="binding site" evidence="1">
    <location>
        <position position="282"/>
    </location>
    <ligand>
        <name>Mg(2+)</name>
        <dbReference type="ChEBI" id="CHEBI:18420"/>
        <label>1</label>
    </ligand>
</feature>
<feature type="binding site" evidence="1">
    <location>
        <position position="282"/>
    </location>
    <ligand>
        <name>Mn(2+)</name>
        <dbReference type="ChEBI" id="CHEBI:29035"/>
        <label>1</label>
    </ligand>
</feature>
<feature type="binding site" evidence="1">
    <location>
        <position position="294"/>
    </location>
    <ligand>
        <name>ATP</name>
        <dbReference type="ChEBI" id="CHEBI:30616"/>
        <label>1</label>
    </ligand>
</feature>
<feature type="binding site" evidence="1">
    <location>
        <position position="294"/>
    </location>
    <ligand>
        <name>Mg(2+)</name>
        <dbReference type="ChEBI" id="CHEBI:18420"/>
        <label>1</label>
    </ligand>
</feature>
<feature type="binding site" evidence="1">
    <location>
        <position position="294"/>
    </location>
    <ligand>
        <name>Mg(2+)</name>
        <dbReference type="ChEBI" id="CHEBI:18420"/>
        <label>2</label>
    </ligand>
</feature>
<feature type="binding site" evidence="1">
    <location>
        <position position="294"/>
    </location>
    <ligand>
        <name>Mn(2+)</name>
        <dbReference type="ChEBI" id="CHEBI:29035"/>
        <label>1</label>
    </ligand>
</feature>
<feature type="binding site" evidence="1">
    <location>
        <position position="294"/>
    </location>
    <ligand>
        <name>Mn(2+)</name>
        <dbReference type="ChEBI" id="CHEBI:29035"/>
        <label>2</label>
    </ligand>
</feature>
<feature type="binding site" evidence="1">
    <location>
        <position position="296"/>
    </location>
    <ligand>
        <name>Mg(2+)</name>
        <dbReference type="ChEBI" id="CHEBI:18420"/>
        <label>2</label>
    </ligand>
</feature>
<feature type="binding site" evidence="1">
    <location>
        <position position="296"/>
    </location>
    <ligand>
        <name>Mn(2+)</name>
        <dbReference type="ChEBI" id="CHEBI:29035"/>
        <label>2</label>
    </ligand>
</feature>
<feature type="binding site" evidence="1">
    <location>
        <position position="697"/>
    </location>
    <ligand>
        <name>ATP</name>
        <dbReference type="ChEBI" id="CHEBI:30616"/>
        <label>2</label>
    </ligand>
</feature>
<feature type="binding site" evidence="1">
    <location>
        <position position="736"/>
    </location>
    <ligand>
        <name>ATP</name>
        <dbReference type="ChEBI" id="CHEBI:30616"/>
        <label>2</label>
    </ligand>
</feature>
<feature type="binding site" evidence="1">
    <location>
        <position position="738"/>
    </location>
    <ligand>
        <name>ATP</name>
        <dbReference type="ChEBI" id="CHEBI:30616"/>
        <label>2</label>
    </ligand>
</feature>
<feature type="binding site" evidence="1">
    <location>
        <position position="743"/>
    </location>
    <ligand>
        <name>ATP</name>
        <dbReference type="ChEBI" id="CHEBI:30616"/>
        <label>2</label>
    </ligand>
</feature>
<feature type="binding site" evidence="1">
    <location>
        <position position="768"/>
    </location>
    <ligand>
        <name>ATP</name>
        <dbReference type="ChEBI" id="CHEBI:30616"/>
        <label>2</label>
    </ligand>
</feature>
<feature type="binding site" evidence="1">
    <location>
        <position position="769"/>
    </location>
    <ligand>
        <name>ATP</name>
        <dbReference type="ChEBI" id="CHEBI:30616"/>
        <label>2</label>
    </ligand>
</feature>
<feature type="binding site" evidence="1">
    <location>
        <position position="770"/>
    </location>
    <ligand>
        <name>ATP</name>
        <dbReference type="ChEBI" id="CHEBI:30616"/>
        <label>2</label>
    </ligand>
</feature>
<feature type="binding site" evidence="1">
    <location>
        <position position="771"/>
    </location>
    <ligand>
        <name>ATP</name>
        <dbReference type="ChEBI" id="CHEBI:30616"/>
        <label>2</label>
    </ligand>
</feature>
<feature type="binding site" evidence="1">
    <location>
        <position position="811"/>
    </location>
    <ligand>
        <name>ATP</name>
        <dbReference type="ChEBI" id="CHEBI:30616"/>
        <label>2</label>
    </ligand>
</feature>
<feature type="binding site" evidence="1">
    <location>
        <position position="811"/>
    </location>
    <ligand>
        <name>Mg(2+)</name>
        <dbReference type="ChEBI" id="CHEBI:18420"/>
        <label>3</label>
    </ligand>
</feature>
<feature type="binding site" evidence="1">
    <location>
        <position position="811"/>
    </location>
    <ligand>
        <name>Mn(2+)</name>
        <dbReference type="ChEBI" id="CHEBI:29035"/>
        <label>3</label>
    </ligand>
</feature>
<feature type="binding site" evidence="1">
    <location>
        <position position="823"/>
    </location>
    <ligand>
        <name>ATP</name>
        <dbReference type="ChEBI" id="CHEBI:30616"/>
        <label>2</label>
    </ligand>
</feature>
<feature type="binding site" evidence="1">
    <location>
        <position position="823"/>
    </location>
    <ligand>
        <name>Mg(2+)</name>
        <dbReference type="ChEBI" id="CHEBI:18420"/>
        <label>3</label>
    </ligand>
</feature>
<feature type="binding site" evidence="1">
    <location>
        <position position="823"/>
    </location>
    <ligand>
        <name>Mg(2+)</name>
        <dbReference type="ChEBI" id="CHEBI:18420"/>
        <label>4</label>
    </ligand>
</feature>
<feature type="binding site" evidence="1">
    <location>
        <position position="823"/>
    </location>
    <ligand>
        <name>Mn(2+)</name>
        <dbReference type="ChEBI" id="CHEBI:29035"/>
        <label>3</label>
    </ligand>
</feature>
<feature type="binding site" evidence="1">
    <location>
        <position position="823"/>
    </location>
    <ligand>
        <name>Mn(2+)</name>
        <dbReference type="ChEBI" id="CHEBI:29035"/>
        <label>4</label>
    </ligand>
</feature>
<feature type="binding site" evidence="1">
    <location>
        <position position="825"/>
    </location>
    <ligand>
        <name>Mg(2+)</name>
        <dbReference type="ChEBI" id="CHEBI:18420"/>
        <label>4</label>
    </ligand>
</feature>
<feature type="binding site" evidence="1">
    <location>
        <position position="825"/>
    </location>
    <ligand>
        <name>Mn(2+)</name>
        <dbReference type="ChEBI" id="CHEBI:29035"/>
        <label>4</label>
    </ligand>
</feature>
<protein>
    <recommendedName>
        <fullName evidence="1">Carbamoyl phosphate synthase large chain</fullName>
        <ecNumber evidence="1">6.3.4.16</ecNumber>
        <ecNumber evidence="1">6.3.5.5</ecNumber>
    </recommendedName>
    <alternativeName>
        <fullName evidence="1">Carbamoyl phosphate synthetase ammonia chain</fullName>
    </alternativeName>
</protein>
<proteinExistence type="inferred from homology"/>
<organism>
    <name type="scientific">Methanocorpusculum labreanum (strain ATCC 43576 / DSM 4855 / Z)</name>
    <dbReference type="NCBI Taxonomy" id="410358"/>
    <lineage>
        <taxon>Archaea</taxon>
        <taxon>Methanobacteriati</taxon>
        <taxon>Methanobacteriota</taxon>
        <taxon>Stenosarchaea group</taxon>
        <taxon>Methanomicrobia</taxon>
        <taxon>Methanomicrobiales</taxon>
        <taxon>Methanocorpusculaceae</taxon>
        <taxon>Methanocorpusculum</taxon>
    </lineage>
</organism>
<reference key="1">
    <citation type="journal article" date="2009" name="Stand. Genomic Sci.">
        <title>Complete genome sequence of Methanocorpusculum labreanum type strain Z.</title>
        <authorList>
            <person name="Anderson I.J."/>
            <person name="Sieprawska-Lupa M."/>
            <person name="Goltsman E."/>
            <person name="Lapidus A."/>
            <person name="Copeland A."/>
            <person name="Glavina Del Rio T."/>
            <person name="Tice H."/>
            <person name="Dalin E."/>
            <person name="Barry K."/>
            <person name="Pitluck S."/>
            <person name="Hauser L."/>
            <person name="Land M."/>
            <person name="Lucas S."/>
            <person name="Richardson P."/>
            <person name="Whitman W.B."/>
            <person name="Kyrpides N.C."/>
        </authorList>
    </citation>
    <scope>NUCLEOTIDE SEQUENCE [LARGE SCALE GENOMIC DNA]</scope>
    <source>
        <strain>ATCC 43576 / DSM 4855 / Z</strain>
    </source>
</reference>
<keyword id="KW-0028">Amino-acid biosynthesis</keyword>
<keyword id="KW-0055">Arginine biosynthesis</keyword>
<keyword id="KW-0067">ATP-binding</keyword>
<keyword id="KW-0436">Ligase</keyword>
<keyword id="KW-0460">Magnesium</keyword>
<keyword id="KW-0464">Manganese</keyword>
<keyword id="KW-0479">Metal-binding</keyword>
<keyword id="KW-0547">Nucleotide-binding</keyword>
<keyword id="KW-0665">Pyrimidine biosynthesis</keyword>
<keyword id="KW-1185">Reference proteome</keyword>
<keyword id="KW-0677">Repeat</keyword>